<dbReference type="EMBL" id="M35027">
    <property type="protein sequence ID" value="AAA48198.1"/>
    <property type="molecule type" value="Genomic_DNA"/>
</dbReference>
<dbReference type="PIR" id="D42529">
    <property type="entry name" value="D42529"/>
</dbReference>
<dbReference type="Proteomes" id="UP000008269">
    <property type="component" value="Segment"/>
</dbReference>
<organism>
    <name type="scientific">Vaccinia virus (strain Copenhagen)</name>
    <name type="common">VACV</name>
    <dbReference type="NCBI Taxonomy" id="10249"/>
    <lineage>
        <taxon>Viruses</taxon>
        <taxon>Varidnaviria</taxon>
        <taxon>Bamfordvirae</taxon>
        <taxon>Nucleocytoviricota</taxon>
        <taxon>Pokkesviricetes</taxon>
        <taxon>Chitovirales</taxon>
        <taxon>Poxviridae</taxon>
        <taxon>Chordopoxvirinae</taxon>
        <taxon>Orthopoxvirus</taxon>
        <taxon>Vaccinia virus</taxon>
    </lineage>
</organism>
<sequence length="95" mass="10827">MRMHITAFFTIHNIKMIIYNRPHMAYSFQTFHEYIIHAVFQRGGYLDGAADIVEERFSVSFSPSLTFTRFGIGSTAPFLNLILIISFPCTSTAVT</sequence>
<reference key="1">
    <citation type="journal article" date="1990" name="Virology">
        <title>The complete DNA sequence of vaccinia virus.</title>
        <authorList>
            <person name="Goebel S.J."/>
            <person name="Johnson G.P."/>
            <person name="Perkus M.E."/>
            <person name="Davis S.W."/>
            <person name="Winslow J.P."/>
            <person name="Paoletti E."/>
        </authorList>
    </citation>
    <scope>NUCLEOTIDE SEQUENCE [LARGE SCALE GENOMIC DNA]</scope>
</reference>
<reference key="2">
    <citation type="journal article" date="1990" name="Virology">
        <title>Appendix to 'The complete DNA sequence of vaccinia virus'.</title>
        <authorList>
            <person name="Goebel S.J."/>
            <person name="Johnson G.P."/>
            <person name="Perkus M.E."/>
            <person name="Davis S.W."/>
            <person name="Winslow J.P."/>
            <person name="Paoletti E."/>
        </authorList>
    </citation>
    <scope>COMPLETE GENOME</scope>
</reference>
<organismHost>
    <name type="scientific">Homo sapiens</name>
    <name type="common">Human</name>
    <dbReference type="NCBI Taxonomy" id="9606"/>
</organismHost>
<feature type="chain" id="PRO_0000099670" description="Uncharacterized 10.8 kDa protein">
    <location>
        <begin position="1"/>
        <end position="95"/>
    </location>
</feature>
<proteinExistence type="predicted"/>
<name>YVBC_VACCC</name>
<accession>P20543</accession>
<gene>
    <name type="ORF">B ORF C</name>
</gene>
<protein>
    <recommendedName>
        <fullName>Uncharacterized 10.8 kDa protein</fullName>
    </recommendedName>
</protein>
<keyword id="KW-1185">Reference proteome</keyword>